<name>LUMQ_PHOLE</name>
<dbReference type="EMBL" id="U35231">
    <property type="protein sequence ID" value="AAA87846.1"/>
    <property type="molecule type" value="Genomic_DNA"/>
</dbReference>
<dbReference type="PIR" id="JC4504">
    <property type="entry name" value="JC4504"/>
</dbReference>
<dbReference type="SMR" id="Q51872"/>
<dbReference type="STRING" id="553611.GCA_001557755_01585"/>
<dbReference type="GO" id="GO:0003700">
    <property type="term" value="F:DNA-binding transcription factor activity"/>
    <property type="evidence" value="ECO:0007669"/>
    <property type="project" value="InterPro"/>
</dbReference>
<dbReference type="GO" id="GO:0043565">
    <property type="term" value="F:sequence-specific DNA binding"/>
    <property type="evidence" value="ECO:0007669"/>
    <property type="project" value="InterPro"/>
</dbReference>
<dbReference type="CDD" id="cd07003">
    <property type="entry name" value="cupin_YobQ-like_N"/>
    <property type="match status" value="1"/>
</dbReference>
<dbReference type="Gene3D" id="1.10.10.60">
    <property type="entry name" value="Homeodomain-like"/>
    <property type="match status" value="2"/>
</dbReference>
<dbReference type="Gene3D" id="2.60.120.10">
    <property type="entry name" value="Jelly Rolls"/>
    <property type="match status" value="1"/>
</dbReference>
<dbReference type="InterPro" id="IPR050204">
    <property type="entry name" value="AraC_XylS_family_regulators"/>
</dbReference>
<dbReference type="InterPro" id="IPR013096">
    <property type="entry name" value="Cupin_2"/>
</dbReference>
<dbReference type="InterPro" id="IPR009057">
    <property type="entry name" value="Homeodomain-like_sf"/>
</dbReference>
<dbReference type="InterPro" id="IPR018060">
    <property type="entry name" value="HTH_AraC"/>
</dbReference>
<dbReference type="InterPro" id="IPR018062">
    <property type="entry name" value="HTH_AraC-typ_CS"/>
</dbReference>
<dbReference type="InterPro" id="IPR014710">
    <property type="entry name" value="RmlC-like_jellyroll"/>
</dbReference>
<dbReference type="InterPro" id="IPR011051">
    <property type="entry name" value="RmlC_Cupin_sf"/>
</dbReference>
<dbReference type="InterPro" id="IPR020449">
    <property type="entry name" value="Tscrpt_reg_AraC-type_HTH"/>
</dbReference>
<dbReference type="PANTHER" id="PTHR46796">
    <property type="entry name" value="HTH-TYPE TRANSCRIPTIONAL ACTIVATOR RHAS-RELATED"/>
    <property type="match status" value="1"/>
</dbReference>
<dbReference type="PANTHER" id="PTHR46796:SF10">
    <property type="entry name" value="TRANSCRIPTIONAL ACTIVATOR FEAR"/>
    <property type="match status" value="1"/>
</dbReference>
<dbReference type="Pfam" id="PF07883">
    <property type="entry name" value="Cupin_2"/>
    <property type="match status" value="1"/>
</dbReference>
<dbReference type="Pfam" id="PF12833">
    <property type="entry name" value="HTH_18"/>
    <property type="match status" value="1"/>
</dbReference>
<dbReference type="PRINTS" id="PR00032">
    <property type="entry name" value="HTHARAC"/>
</dbReference>
<dbReference type="SMART" id="SM00342">
    <property type="entry name" value="HTH_ARAC"/>
    <property type="match status" value="1"/>
</dbReference>
<dbReference type="SUPFAM" id="SSF46689">
    <property type="entry name" value="Homeodomain-like"/>
    <property type="match status" value="2"/>
</dbReference>
<dbReference type="SUPFAM" id="SSF51182">
    <property type="entry name" value="RmlC-like cupins"/>
    <property type="match status" value="1"/>
</dbReference>
<dbReference type="PROSITE" id="PS00041">
    <property type="entry name" value="HTH_ARAC_FAMILY_1"/>
    <property type="match status" value="1"/>
</dbReference>
<dbReference type="PROSITE" id="PS01124">
    <property type="entry name" value="HTH_ARAC_FAMILY_2"/>
    <property type="match status" value="1"/>
</dbReference>
<feature type="chain" id="PRO_0000194530" description="Probable transcriptional regulator LumQ">
    <location>
        <begin position="1"/>
        <end position="248"/>
    </location>
</feature>
<feature type="domain" description="HTH araC/xylS-type" evidence="1">
    <location>
        <begin position="148"/>
        <end position="246"/>
    </location>
</feature>
<feature type="DNA-binding region" description="H-T-H motif" evidence="1">
    <location>
        <begin position="165"/>
        <end position="186"/>
    </location>
</feature>
<feature type="DNA-binding region" description="H-T-H motif" evidence="1">
    <location>
        <begin position="213"/>
        <end position="236"/>
    </location>
</feature>
<comment type="function">
    <text>Probable transcriptional regulator. Its target gene(s) is not yet known.</text>
</comment>
<accession>Q51872</accession>
<protein>
    <recommendedName>
        <fullName>Probable transcriptional regulator LumQ</fullName>
    </recommendedName>
</protein>
<keyword id="KW-0238">DNA-binding</keyword>
<keyword id="KW-0804">Transcription</keyword>
<keyword id="KW-0805">Transcription regulation</keyword>
<organism>
    <name type="scientific">Photobacterium leiognathi</name>
    <dbReference type="NCBI Taxonomy" id="553611"/>
    <lineage>
        <taxon>Bacteria</taxon>
        <taxon>Pseudomonadati</taxon>
        <taxon>Pseudomonadota</taxon>
        <taxon>Gammaproteobacteria</taxon>
        <taxon>Vibrionales</taxon>
        <taxon>Vibrionaceae</taxon>
        <taxon>Photobacterium</taxon>
    </lineage>
</organism>
<sequence length="248" mass="28357">MEIKTPSFRVETLDKSKTYHHHEYPQIILGLMGKSELSIEDSSVCLSPGMGYRINANVEHSFSGTSNNQVLVMNLPPFISMTDVEQFGNSYFSLDARTHQLISLLATELKEHADDSLLSQSISNTLQCLIKRSLMLFDEKKVERLNMVLIDNYIEQHLQKKISVAELSSVAFLAQSQFYALFKSQMGITPHQYVLRKRLDLAKQLIAERQKPLSQVAQLCGFSSQSSFSQAFRRLYGMSPTRYQFFIR</sequence>
<proteinExistence type="predicted"/>
<gene>
    <name type="primary">lumQ</name>
</gene>
<evidence type="ECO:0000255" key="1">
    <source>
        <dbReference type="PROSITE-ProRule" id="PRU00593"/>
    </source>
</evidence>
<reference key="1">
    <citation type="journal article" date="1995" name="Biochem. Biophys. Res. Commun.">
        <title>The lumQ gene is linked to the lumP gene and the lux operon in Photobacterium leiognathi.</title>
        <authorList>
            <person name="Lin J.W."/>
            <person name="Yu K.Y."/>
            <person name="Chao Y.F."/>
            <person name="Weng S.F."/>
        </authorList>
    </citation>
    <scope>NUCLEOTIDE SEQUENCE [GENOMIC DNA]</scope>
    <source>
        <strain>PL741</strain>
    </source>
</reference>